<evidence type="ECO:0000255" key="1">
    <source>
        <dbReference type="HAMAP-Rule" id="MF_01368"/>
    </source>
</evidence>
<evidence type="ECO:0000305" key="2"/>
<feature type="chain" id="PRO_1000055797" description="Large ribosomal subunit protein bL17">
    <location>
        <begin position="1"/>
        <end position="142"/>
    </location>
</feature>
<accession>Q252X5</accession>
<organism>
    <name type="scientific">Chlamydia felis (strain Fe/C-56)</name>
    <name type="common">Chlamydophila felis</name>
    <dbReference type="NCBI Taxonomy" id="264202"/>
    <lineage>
        <taxon>Bacteria</taxon>
        <taxon>Pseudomonadati</taxon>
        <taxon>Chlamydiota</taxon>
        <taxon>Chlamydiia</taxon>
        <taxon>Chlamydiales</taxon>
        <taxon>Chlamydiaceae</taxon>
        <taxon>Chlamydia/Chlamydophila group</taxon>
        <taxon>Chlamydia</taxon>
    </lineage>
</organism>
<gene>
    <name evidence="1" type="primary">rplQ</name>
    <name type="ordered locus">CF0891</name>
</gene>
<keyword id="KW-0687">Ribonucleoprotein</keyword>
<keyword id="KW-0689">Ribosomal protein</keyword>
<name>RL17_CHLFF</name>
<reference key="1">
    <citation type="journal article" date="2006" name="DNA Res.">
        <title>Genome sequence of the cat pathogen, Chlamydophila felis.</title>
        <authorList>
            <person name="Azuma Y."/>
            <person name="Hirakawa H."/>
            <person name="Yamashita A."/>
            <person name="Cai Y."/>
            <person name="Rahman M.A."/>
            <person name="Suzuki H."/>
            <person name="Mitaku S."/>
            <person name="Toh H."/>
            <person name="Goto S."/>
            <person name="Murakami T."/>
            <person name="Sugi K."/>
            <person name="Hayashi H."/>
            <person name="Fukushi H."/>
            <person name="Hattori M."/>
            <person name="Kuhara S."/>
            <person name="Shirai M."/>
        </authorList>
    </citation>
    <scope>NUCLEOTIDE SEQUENCE [LARGE SCALE GENOMIC DNA]</scope>
    <source>
        <strain>Fe/C-56</strain>
    </source>
</reference>
<comment type="subunit">
    <text evidence="1">Part of the 50S ribosomal subunit. Contacts protein L32.</text>
</comment>
<comment type="similarity">
    <text evidence="1">Belongs to the bacterial ribosomal protein bL17 family.</text>
</comment>
<protein>
    <recommendedName>
        <fullName evidence="1">Large ribosomal subunit protein bL17</fullName>
    </recommendedName>
    <alternativeName>
        <fullName evidence="2">50S ribosomal protein L17</fullName>
    </alternativeName>
</protein>
<dbReference type="EMBL" id="AP006861">
    <property type="protein sequence ID" value="BAE81663.1"/>
    <property type="molecule type" value="Genomic_DNA"/>
</dbReference>
<dbReference type="RefSeq" id="WP_011458438.1">
    <property type="nucleotide sequence ID" value="NC_007899.1"/>
</dbReference>
<dbReference type="SMR" id="Q252X5"/>
<dbReference type="STRING" id="264202.CF0891"/>
<dbReference type="KEGG" id="cfe:CF0891"/>
<dbReference type="eggNOG" id="COG0203">
    <property type="taxonomic scope" value="Bacteria"/>
</dbReference>
<dbReference type="HOGENOM" id="CLU_074407_2_0_0"/>
<dbReference type="OrthoDB" id="9809073at2"/>
<dbReference type="Proteomes" id="UP000001260">
    <property type="component" value="Chromosome"/>
</dbReference>
<dbReference type="GO" id="GO:0022625">
    <property type="term" value="C:cytosolic large ribosomal subunit"/>
    <property type="evidence" value="ECO:0007669"/>
    <property type="project" value="TreeGrafter"/>
</dbReference>
<dbReference type="GO" id="GO:0003735">
    <property type="term" value="F:structural constituent of ribosome"/>
    <property type="evidence" value="ECO:0007669"/>
    <property type="project" value="InterPro"/>
</dbReference>
<dbReference type="GO" id="GO:0006412">
    <property type="term" value="P:translation"/>
    <property type="evidence" value="ECO:0007669"/>
    <property type="project" value="UniProtKB-UniRule"/>
</dbReference>
<dbReference type="FunFam" id="3.90.1030.10:FF:000003">
    <property type="entry name" value="50S ribosomal protein L17"/>
    <property type="match status" value="1"/>
</dbReference>
<dbReference type="Gene3D" id="3.90.1030.10">
    <property type="entry name" value="Ribosomal protein L17"/>
    <property type="match status" value="1"/>
</dbReference>
<dbReference type="HAMAP" id="MF_01368">
    <property type="entry name" value="Ribosomal_bL17"/>
    <property type="match status" value="1"/>
</dbReference>
<dbReference type="InterPro" id="IPR000456">
    <property type="entry name" value="Ribosomal_bL17"/>
</dbReference>
<dbReference type="InterPro" id="IPR047859">
    <property type="entry name" value="Ribosomal_bL17_CS"/>
</dbReference>
<dbReference type="InterPro" id="IPR036373">
    <property type="entry name" value="Ribosomal_bL17_sf"/>
</dbReference>
<dbReference type="NCBIfam" id="TIGR00059">
    <property type="entry name" value="L17"/>
    <property type="match status" value="1"/>
</dbReference>
<dbReference type="PANTHER" id="PTHR14413:SF16">
    <property type="entry name" value="LARGE RIBOSOMAL SUBUNIT PROTEIN BL17M"/>
    <property type="match status" value="1"/>
</dbReference>
<dbReference type="PANTHER" id="PTHR14413">
    <property type="entry name" value="RIBOSOMAL PROTEIN L17"/>
    <property type="match status" value="1"/>
</dbReference>
<dbReference type="Pfam" id="PF01196">
    <property type="entry name" value="Ribosomal_L17"/>
    <property type="match status" value="1"/>
</dbReference>
<dbReference type="SUPFAM" id="SSF64263">
    <property type="entry name" value="Prokaryotic ribosomal protein L17"/>
    <property type="match status" value="1"/>
</dbReference>
<dbReference type="PROSITE" id="PS01167">
    <property type="entry name" value="RIBOSOMAL_L17"/>
    <property type="match status" value="1"/>
</dbReference>
<proteinExistence type="inferred from homology"/>
<sequence length="142" mass="16370">MQHARKKFRVGRTSAHNRCMLANMLKSLIHQERIETTLPKAKELRRCADKMITLAKKNTLAARRLAVARLMVRYNKLTSKEARQAKAGDLSVYNVDRKVINKLFDELGTRFVSRQGGYTRILKLQNRVGDNARKCIIEFLAN</sequence>